<evidence type="ECO:0000250" key="1"/>
<evidence type="ECO:0000255" key="2"/>
<evidence type="ECO:0000255" key="3">
    <source>
        <dbReference type="PROSITE-ProRule" id="PRU01210"/>
    </source>
</evidence>
<evidence type="ECO:0000269" key="4">
    <source>
    </source>
</evidence>
<evidence type="ECO:0000305" key="5"/>
<proteinExistence type="evidence at transcript level"/>
<accession>Q9BKJ0</accession>
<accession>Q6EN21</accession>
<accession>Q9GZC4</accession>
<keyword id="KW-1015">Disulfide bond</keyword>
<keyword id="KW-0872">Ion channel impairing toxin</keyword>
<keyword id="KW-0528">Neurotoxin</keyword>
<keyword id="KW-0964">Secreted</keyword>
<keyword id="KW-0732">Signal</keyword>
<keyword id="KW-0800">Toxin</keyword>
<keyword id="KW-0738">Voltage-gated sodium channel impairing toxin</keyword>
<name>SCN3_OLIMR</name>
<reference key="1">
    <citation type="submission" date="1999-01" db="EMBL/GenBank/DDBJ databases">
        <title>Cloning of anti-epilepsy peptide cDNA from scorpion Buthus martensii Karsch.</title>
        <authorList>
            <person name="Zhang J.-H."/>
            <person name="Hua Z.C."/>
            <person name="Zhu D.X."/>
        </authorList>
    </citation>
    <scope>NUCLEOTIDE SEQUENCE [MRNA]</scope>
    <source>
        <tissue>Venom gland</tissue>
    </source>
</reference>
<reference key="2">
    <citation type="submission" date="2000-03" db="EMBL/GenBank/DDBJ databases">
        <title>Cloning of anti-neuroexcitation peptide III (ANEP) cDNA from Scorpion Buthus martensii Karsch.</title>
        <authorList>
            <person name="Zhang J.-H."/>
            <person name="Hua Z.C."/>
            <person name="Zhu D.X."/>
        </authorList>
    </citation>
    <scope>NUCLEOTIDE SEQUENCE [MRNA]</scope>
    <source>
        <tissue>Venom gland</tissue>
    </source>
</reference>
<reference key="3">
    <citation type="submission" date="2001-06" db="EMBL/GenBank/DDBJ databases">
        <title>Nucleotide sequence of scorpion toxin.</title>
        <authorList>
            <person name="Zeng X.-C."/>
            <person name="Peng F."/>
            <person name="Li W.-X."/>
        </authorList>
    </citation>
    <scope>NUCLEOTIDE SEQUENCE [GENOMIC DNA / MRNA]</scope>
</reference>
<reference key="4">
    <citation type="journal article" date="2001" name="Prep. Biochem. Biotechnol.">
        <title>Expression of anti-neuroexcitation peptide (ANEP) of scorpion Buthus martensii Karsch in Escherichia coli.</title>
        <authorList>
            <person name="Zhang J.-H."/>
            <person name="Hua Z.C."/>
            <person name="Xu Z."/>
            <person name="Zheng W.J."/>
            <person name="Zhu D.X."/>
        </authorList>
    </citation>
    <scope>FUNCTION</scope>
</reference>
<sequence>MKLSLLLVISASMLIDGLVNADGYIRGSNGCKISCLWGNEGCNKECKGFGAYYGYCWTWGLACWCEGLPDDKTWKSESNTCGGKK</sequence>
<feature type="signal peptide" evidence="2">
    <location>
        <begin position="1"/>
        <end position="21"/>
    </location>
</feature>
<feature type="chain" id="PRO_0000035265" description="Anti-neuroexcitation peptide 3">
    <location>
        <begin position="22"/>
        <end position="85"/>
    </location>
</feature>
<feature type="domain" description="LCN-type CS-alpha/beta" evidence="3">
    <location>
        <begin position="22"/>
        <end position="82"/>
    </location>
</feature>
<feature type="disulfide bond" evidence="3">
    <location>
        <begin position="31"/>
        <end position="81"/>
    </location>
</feature>
<feature type="disulfide bond" evidence="3">
    <location>
        <begin position="35"/>
        <end position="56"/>
    </location>
</feature>
<feature type="disulfide bond" evidence="3">
    <location>
        <begin position="42"/>
        <end position="63"/>
    </location>
</feature>
<feature type="disulfide bond" evidence="3">
    <location>
        <begin position="46"/>
        <end position="65"/>
    </location>
</feature>
<feature type="sequence conflict" description="In Ref. 2; AAK28342." evidence="5" ref="2">
    <original>K</original>
    <variation>I</variation>
    <location>
        <position position="47"/>
    </location>
</feature>
<comment type="function">
    <text evidence="1 4">Binds to sodium channels (Nav) and inhibits them (By similarity). Recombinant ANEP delays the convulsion seizure of model animals by 18% and shows anti-neuroexcitatory activity.</text>
</comment>
<comment type="subcellular location">
    <subcellularLocation>
        <location evidence="1">Secreted</location>
    </subcellularLocation>
</comment>
<comment type="tissue specificity">
    <text>Expressed by the venom gland.</text>
</comment>
<comment type="domain">
    <text evidence="5">Has the structural arrangement of an alpha-helix connected to antiparallel beta-sheets by disulfide bonds (CS-alpha/beta).</text>
</comment>
<comment type="similarity">
    <text evidence="5">Belongs to the long (4 C-C) scorpion toxin superfamily. Sodium channel inhibitor family. Beta subfamily.</text>
</comment>
<organism>
    <name type="scientific">Olivierus martensii</name>
    <name type="common">Manchurian scorpion</name>
    <name type="synonym">Mesobuthus martensii</name>
    <dbReference type="NCBI Taxonomy" id="34649"/>
    <lineage>
        <taxon>Eukaryota</taxon>
        <taxon>Metazoa</taxon>
        <taxon>Ecdysozoa</taxon>
        <taxon>Arthropoda</taxon>
        <taxon>Chelicerata</taxon>
        <taxon>Arachnida</taxon>
        <taxon>Scorpiones</taxon>
        <taxon>Buthida</taxon>
        <taxon>Buthoidea</taxon>
        <taxon>Buthidae</taxon>
        <taxon>Olivierus</taxon>
    </lineage>
</organism>
<dbReference type="EMBL" id="AF122003">
    <property type="protein sequence ID" value="AAG01571.1"/>
    <property type="molecule type" value="mRNA"/>
</dbReference>
<dbReference type="EMBL" id="AF242737">
    <property type="protein sequence ID" value="AAK28342.1"/>
    <property type="molecule type" value="mRNA"/>
</dbReference>
<dbReference type="EMBL" id="AY040630">
    <property type="protein sequence ID" value="AAK94768.1"/>
    <property type="molecule type" value="Genomic_DNA"/>
</dbReference>
<dbReference type="EMBL" id="AY040631">
    <property type="protein sequence ID" value="AAK94769.1"/>
    <property type="molecule type" value="mRNA"/>
</dbReference>
<dbReference type="SMR" id="Q9BKJ0"/>
<dbReference type="GO" id="GO:0005576">
    <property type="term" value="C:extracellular region"/>
    <property type="evidence" value="ECO:0007669"/>
    <property type="project" value="UniProtKB-SubCell"/>
</dbReference>
<dbReference type="GO" id="GO:0019871">
    <property type="term" value="F:sodium channel inhibitor activity"/>
    <property type="evidence" value="ECO:0007669"/>
    <property type="project" value="InterPro"/>
</dbReference>
<dbReference type="GO" id="GO:0090729">
    <property type="term" value="F:toxin activity"/>
    <property type="evidence" value="ECO:0007669"/>
    <property type="project" value="UniProtKB-KW"/>
</dbReference>
<dbReference type="GO" id="GO:0006952">
    <property type="term" value="P:defense response"/>
    <property type="evidence" value="ECO:0007669"/>
    <property type="project" value="InterPro"/>
</dbReference>
<dbReference type="CDD" id="cd23106">
    <property type="entry name" value="neurotoxins_LC_scorpion"/>
    <property type="match status" value="1"/>
</dbReference>
<dbReference type="FunFam" id="3.30.30.10:FF:000002">
    <property type="entry name" value="Alpha-like toxin BmK-M1"/>
    <property type="match status" value="1"/>
</dbReference>
<dbReference type="Gene3D" id="3.30.30.10">
    <property type="entry name" value="Knottin, scorpion toxin-like"/>
    <property type="match status" value="1"/>
</dbReference>
<dbReference type="InterPro" id="IPR044062">
    <property type="entry name" value="LCN-type_CS_alpha_beta_dom"/>
</dbReference>
<dbReference type="InterPro" id="IPR003614">
    <property type="entry name" value="Scorpion_toxin-like"/>
</dbReference>
<dbReference type="InterPro" id="IPR036574">
    <property type="entry name" value="Scorpion_toxin-like_sf"/>
</dbReference>
<dbReference type="InterPro" id="IPR018218">
    <property type="entry name" value="Scorpion_toxinL"/>
</dbReference>
<dbReference type="InterPro" id="IPR002061">
    <property type="entry name" value="Scorpion_toxinL/defensin"/>
</dbReference>
<dbReference type="Pfam" id="PF00537">
    <property type="entry name" value="Toxin_3"/>
    <property type="match status" value="1"/>
</dbReference>
<dbReference type="PRINTS" id="PR00285">
    <property type="entry name" value="SCORPNTOXIN"/>
</dbReference>
<dbReference type="SMART" id="SM00505">
    <property type="entry name" value="Knot1"/>
    <property type="match status" value="1"/>
</dbReference>
<dbReference type="SUPFAM" id="SSF57095">
    <property type="entry name" value="Scorpion toxin-like"/>
    <property type="match status" value="1"/>
</dbReference>
<dbReference type="PROSITE" id="PS51863">
    <property type="entry name" value="LCN_CSAB"/>
    <property type="match status" value="1"/>
</dbReference>
<protein>
    <recommendedName>
        <fullName>Anti-neuroexcitation peptide 3</fullName>
        <shortName>BmKANEP3</shortName>
    </recommendedName>
    <alternativeName>
        <fullName>Anti-epilepsy peptide</fullName>
    </alternativeName>
    <alternativeName>
        <fullName>Anti-neuroexcitation peptide III</fullName>
        <shortName>ANEPIII</shortName>
    </alternativeName>
    <alternativeName>
        <fullName>Toxin KIM</fullName>
    </alternativeName>
</protein>